<organism>
    <name type="scientific">Streptococcus pneumoniae serotype 4 (strain ATCC BAA-334 / TIGR4)</name>
    <dbReference type="NCBI Taxonomy" id="170187"/>
    <lineage>
        <taxon>Bacteria</taxon>
        <taxon>Bacillati</taxon>
        <taxon>Bacillota</taxon>
        <taxon>Bacilli</taxon>
        <taxon>Lactobacillales</taxon>
        <taxon>Streptococcaceae</taxon>
        <taxon>Streptococcus</taxon>
    </lineage>
</organism>
<sequence length="178" mass="19431">MSRIGNKVIVLPAGVELANNDNVVTVKGSKGELTREFSKDIEIRVEGTEITLHRPNDSKEMKTIHGTTRALLNNMVVGVSEGFKKELEMRGVGYRAQLQGSKLVLAVGKSHPDEVEAPEGITFELPNPTTIVVSGISKEVVGQTAAYVRSLRSPEPYKGKGIRYVGEFVRRKEGKTGK</sequence>
<reference key="1">
    <citation type="journal article" date="2001" name="Science">
        <title>Complete genome sequence of a virulent isolate of Streptococcus pneumoniae.</title>
        <authorList>
            <person name="Tettelin H."/>
            <person name="Nelson K.E."/>
            <person name="Paulsen I.T."/>
            <person name="Eisen J.A."/>
            <person name="Read T.D."/>
            <person name="Peterson S.N."/>
            <person name="Heidelberg J.F."/>
            <person name="DeBoy R.T."/>
            <person name="Haft D.H."/>
            <person name="Dodson R.J."/>
            <person name="Durkin A.S."/>
            <person name="Gwinn M.L."/>
            <person name="Kolonay J.F."/>
            <person name="Nelson W.C."/>
            <person name="Peterson J.D."/>
            <person name="Umayam L.A."/>
            <person name="White O."/>
            <person name="Salzberg S.L."/>
            <person name="Lewis M.R."/>
            <person name="Radune D."/>
            <person name="Holtzapple E.K."/>
            <person name="Khouri H.M."/>
            <person name="Wolf A.M."/>
            <person name="Utterback T.R."/>
            <person name="Hansen C.L."/>
            <person name="McDonald L.A."/>
            <person name="Feldblyum T.V."/>
            <person name="Angiuoli S.V."/>
            <person name="Dickinson T."/>
            <person name="Hickey E.K."/>
            <person name="Holt I.E."/>
            <person name="Loftus B.J."/>
            <person name="Yang F."/>
            <person name="Smith H.O."/>
            <person name="Venter J.C."/>
            <person name="Dougherty B.A."/>
            <person name="Morrison D.A."/>
            <person name="Hollingshead S.K."/>
            <person name="Fraser C.M."/>
        </authorList>
    </citation>
    <scope>NUCLEOTIDE SEQUENCE [LARGE SCALE GENOMIC DNA]</scope>
    <source>
        <strain>ATCC BAA-334 / TIGR4</strain>
    </source>
</reference>
<feature type="chain" id="PRO_0000260944" description="Large ribosomal subunit protein uL6">
    <location>
        <begin position="1"/>
        <end position="178"/>
    </location>
</feature>
<comment type="function">
    <text evidence="1">This protein binds to the 23S rRNA, and is important in its secondary structure. It is located near the subunit interface in the base of the L7/L12 stalk, and near the tRNA binding site of the peptidyltransferase center.</text>
</comment>
<comment type="subunit">
    <text evidence="1">Part of the 50S ribosomal subunit.</text>
</comment>
<comment type="similarity">
    <text evidence="1">Belongs to the universal ribosomal protein uL6 family.</text>
</comment>
<gene>
    <name evidence="1" type="primary">rplF</name>
    <name type="ordered locus">SP_0225</name>
</gene>
<proteinExistence type="inferred from homology"/>
<keyword id="KW-1185">Reference proteome</keyword>
<keyword id="KW-0687">Ribonucleoprotein</keyword>
<keyword id="KW-0689">Ribosomal protein</keyword>
<keyword id="KW-0694">RNA-binding</keyword>
<keyword id="KW-0699">rRNA-binding</keyword>
<evidence type="ECO:0000255" key="1">
    <source>
        <dbReference type="HAMAP-Rule" id="MF_01365"/>
    </source>
</evidence>
<evidence type="ECO:0000305" key="2"/>
<accession>Q97SU7</accession>
<name>RL6_STRPN</name>
<dbReference type="EMBL" id="AE005672">
    <property type="protein sequence ID" value="AAK74405.1"/>
    <property type="molecule type" value="Genomic_DNA"/>
</dbReference>
<dbReference type="PIR" id="D95026">
    <property type="entry name" value="D95026"/>
</dbReference>
<dbReference type="RefSeq" id="WP_000086634.1">
    <property type="nucleotide sequence ID" value="NZ_CP155539.1"/>
</dbReference>
<dbReference type="SMR" id="Q97SU7"/>
<dbReference type="PaxDb" id="170187-SP_0225"/>
<dbReference type="EnsemblBacteria" id="AAK74405">
    <property type="protein sequence ID" value="AAK74405"/>
    <property type="gene ID" value="SP_0225"/>
</dbReference>
<dbReference type="KEGG" id="spn:SP_0225"/>
<dbReference type="eggNOG" id="COG0097">
    <property type="taxonomic scope" value="Bacteria"/>
</dbReference>
<dbReference type="PhylomeDB" id="Q97SU7"/>
<dbReference type="BioCyc" id="SPNE170187:G1FZB-229-MONOMER"/>
<dbReference type="Proteomes" id="UP000000585">
    <property type="component" value="Chromosome"/>
</dbReference>
<dbReference type="GO" id="GO:0022625">
    <property type="term" value="C:cytosolic large ribosomal subunit"/>
    <property type="evidence" value="ECO:0007669"/>
    <property type="project" value="TreeGrafter"/>
</dbReference>
<dbReference type="GO" id="GO:0019843">
    <property type="term" value="F:rRNA binding"/>
    <property type="evidence" value="ECO:0007669"/>
    <property type="project" value="UniProtKB-UniRule"/>
</dbReference>
<dbReference type="GO" id="GO:0003735">
    <property type="term" value="F:structural constituent of ribosome"/>
    <property type="evidence" value="ECO:0007669"/>
    <property type="project" value="InterPro"/>
</dbReference>
<dbReference type="GO" id="GO:0002181">
    <property type="term" value="P:cytoplasmic translation"/>
    <property type="evidence" value="ECO:0007669"/>
    <property type="project" value="TreeGrafter"/>
</dbReference>
<dbReference type="FunFam" id="3.90.930.12:FF:000001">
    <property type="entry name" value="50S ribosomal protein L6"/>
    <property type="match status" value="1"/>
</dbReference>
<dbReference type="FunFam" id="3.90.930.12:FF:000002">
    <property type="entry name" value="50S ribosomal protein L6"/>
    <property type="match status" value="1"/>
</dbReference>
<dbReference type="Gene3D" id="3.90.930.12">
    <property type="entry name" value="Ribosomal protein L6, alpha-beta domain"/>
    <property type="match status" value="2"/>
</dbReference>
<dbReference type="HAMAP" id="MF_01365_B">
    <property type="entry name" value="Ribosomal_uL6_B"/>
    <property type="match status" value="1"/>
</dbReference>
<dbReference type="InterPro" id="IPR000702">
    <property type="entry name" value="Ribosomal_uL6-like"/>
</dbReference>
<dbReference type="InterPro" id="IPR036789">
    <property type="entry name" value="Ribosomal_uL6-like_a/b-dom_sf"/>
</dbReference>
<dbReference type="InterPro" id="IPR020040">
    <property type="entry name" value="Ribosomal_uL6_a/b-dom"/>
</dbReference>
<dbReference type="InterPro" id="IPR019906">
    <property type="entry name" value="Ribosomal_uL6_bac-type"/>
</dbReference>
<dbReference type="InterPro" id="IPR002358">
    <property type="entry name" value="Ribosomal_uL6_CS"/>
</dbReference>
<dbReference type="NCBIfam" id="TIGR03654">
    <property type="entry name" value="L6_bact"/>
    <property type="match status" value="1"/>
</dbReference>
<dbReference type="PANTHER" id="PTHR11655">
    <property type="entry name" value="60S/50S RIBOSOMAL PROTEIN L6/L9"/>
    <property type="match status" value="1"/>
</dbReference>
<dbReference type="PANTHER" id="PTHR11655:SF14">
    <property type="entry name" value="LARGE RIBOSOMAL SUBUNIT PROTEIN UL6M"/>
    <property type="match status" value="1"/>
</dbReference>
<dbReference type="Pfam" id="PF00347">
    <property type="entry name" value="Ribosomal_L6"/>
    <property type="match status" value="2"/>
</dbReference>
<dbReference type="PIRSF" id="PIRSF002162">
    <property type="entry name" value="Ribosomal_L6"/>
    <property type="match status" value="1"/>
</dbReference>
<dbReference type="PRINTS" id="PR00059">
    <property type="entry name" value="RIBOSOMALL6"/>
</dbReference>
<dbReference type="SUPFAM" id="SSF56053">
    <property type="entry name" value="Ribosomal protein L6"/>
    <property type="match status" value="2"/>
</dbReference>
<dbReference type="PROSITE" id="PS00525">
    <property type="entry name" value="RIBOSOMAL_L6_1"/>
    <property type="match status" value="1"/>
</dbReference>
<protein>
    <recommendedName>
        <fullName evidence="1">Large ribosomal subunit protein uL6</fullName>
    </recommendedName>
    <alternativeName>
        <fullName evidence="2">50S ribosomal protein L6</fullName>
    </alternativeName>
</protein>